<accession>Q04Y84</accession>
<keyword id="KW-0131">Cell cycle</keyword>
<keyword id="KW-0132">Cell division</keyword>
<keyword id="KW-0997">Cell inner membrane</keyword>
<keyword id="KW-1003">Cell membrane</keyword>
<keyword id="KW-0133">Cell shape</keyword>
<keyword id="KW-0961">Cell wall biogenesis/degradation</keyword>
<keyword id="KW-0460">Magnesium</keyword>
<keyword id="KW-0472">Membrane</keyword>
<keyword id="KW-0479">Metal-binding</keyword>
<keyword id="KW-0573">Peptidoglycan synthesis</keyword>
<keyword id="KW-0808">Transferase</keyword>
<keyword id="KW-0812">Transmembrane</keyword>
<keyword id="KW-1133">Transmembrane helix</keyword>
<organism>
    <name type="scientific">Leptospira borgpetersenii serovar Hardjo-bovis (strain L550)</name>
    <dbReference type="NCBI Taxonomy" id="355276"/>
    <lineage>
        <taxon>Bacteria</taxon>
        <taxon>Pseudomonadati</taxon>
        <taxon>Spirochaetota</taxon>
        <taxon>Spirochaetia</taxon>
        <taxon>Leptospirales</taxon>
        <taxon>Leptospiraceae</taxon>
        <taxon>Leptospira</taxon>
    </lineage>
</organism>
<evidence type="ECO:0000255" key="1">
    <source>
        <dbReference type="HAMAP-Rule" id="MF_00038"/>
    </source>
</evidence>
<sequence length="370" mass="40560">MFYYLYDLYFNHLDSLRIFSYVTFRALMAGLTSMFVTFWLGHKVIDFLYGLKFRESVRDDGPKSHESKKGTPTMGGLLIIGSLLLSVLLWGNLKNSNIIVLSVFALCFSALGFADDYMKSVKKIKGGMKARTKFLLSILISLVFCILFFYYTGVIPTGHSGKIPFQITDLFFPFVKGPVLALGVFAIPFSILVIIGSSHAVNLTDGLDGLATGTVAISVVTLGIIAYVSGTPITANYLNIPYLPGAHEYSVFLSALAGALFGFLWFNAHPAQVFMGDTGSLFLGATLGMIVILLKKEILLLILGAIFVSEALSVILQVGSFKLTGKRIFKMAPLHHHFELGGVKETKIVIRFWIIAVILAIISLSTLKIQ</sequence>
<proteinExistence type="inferred from homology"/>
<gene>
    <name evidence="1" type="primary">mraY</name>
    <name type="ordered locus">LBL_2601</name>
</gene>
<protein>
    <recommendedName>
        <fullName evidence="1">Phospho-N-acetylmuramoyl-pentapeptide-transferase</fullName>
        <ecNumber evidence="1">2.7.8.13</ecNumber>
    </recommendedName>
    <alternativeName>
        <fullName evidence="1">UDP-MurNAc-pentapeptide phosphotransferase</fullName>
    </alternativeName>
</protein>
<feature type="chain" id="PRO_1000003002" description="Phospho-N-acetylmuramoyl-pentapeptide-transferase">
    <location>
        <begin position="1"/>
        <end position="370"/>
    </location>
</feature>
<feature type="transmembrane region" description="Helical" evidence="1">
    <location>
        <begin position="31"/>
        <end position="51"/>
    </location>
</feature>
<feature type="transmembrane region" description="Helical" evidence="1">
    <location>
        <begin position="73"/>
        <end position="93"/>
    </location>
</feature>
<feature type="transmembrane region" description="Helical" evidence="1">
    <location>
        <begin position="98"/>
        <end position="118"/>
    </location>
</feature>
<feature type="transmembrane region" description="Helical" evidence="1">
    <location>
        <begin position="135"/>
        <end position="155"/>
    </location>
</feature>
<feature type="transmembrane region" description="Helical" evidence="1">
    <location>
        <begin position="177"/>
        <end position="197"/>
    </location>
</feature>
<feature type="transmembrane region" description="Helical" evidence="1">
    <location>
        <begin position="209"/>
        <end position="229"/>
    </location>
</feature>
<feature type="transmembrane region" description="Helical" evidence="1">
    <location>
        <begin position="251"/>
        <end position="271"/>
    </location>
</feature>
<feature type="transmembrane region" description="Helical" evidence="1">
    <location>
        <begin position="273"/>
        <end position="293"/>
    </location>
</feature>
<feature type="transmembrane region" description="Helical" evidence="1">
    <location>
        <begin position="298"/>
        <end position="318"/>
    </location>
</feature>
<feature type="transmembrane region" description="Helical" evidence="1">
    <location>
        <begin position="347"/>
        <end position="367"/>
    </location>
</feature>
<comment type="function">
    <text evidence="1">Catalyzes the initial step of the lipid cycle reactions in the biosynthesis of the cell wall peptidoglycan: transfers peptidoglycan precursor phospho-MurNAc-pentapeptide from UDP-MurNAc-pentapeptide onto the lipid carrier undecaprenyl phosphate, yielding undecaprenyl-pyrophosphoryl-MurNAc-pentapeptide, known as lipid I.</text>
</comment>
<comment type="catalytic activity">
    <reaction evidence="1">
        <text>UDP-N-acetyl-alpha-D-muramoyl-L-alanyl-gamma-D-glutamyl-meso-2,6-diaminopimeloyl-D-alanyl-D-alanine + di-trans,octa-cis-undecaprenyl phosphate = di-trans,octa-cis-undecaprenyl diphospho-N-acetyl-alpha-D-muramoyl-L-alanyl-D-glutamyl-meso-2,6-diaminopimeloyl-D-alanyl-D-alanine + UMP</text>
        <dbReference type="Rhea" id="RHEA:28386"/>
        <dbReference type="ChEBI" id="CHEBI:57865"/>
        <dbReference type="ChEBI" id="CHEBI:60392"/>
        <dbReference type="ChEBI" id="CHEBI:61386"/>
        <dbReference type="ChEBI" id="CHEBI:61387"/>
        <dbReference type="EC" id="2.7.8.13"/>
    </reaction>
</comment>
<comment type="cofactor">
    <cofactor evidence="1">
        <name>Mg(2+)</name>
        <dbReference type="ChEBI" id="CHEBI:18420"/>
    </cofactor>
</comment>
<comment type="pathway">
    <text evidence="1">Cell wall biogenesis; peptidoglycan biosynthesis.</text>
</comment>
<comment type="subcellular location">
    <subcellularLocation>
        <location evidence="1">Cell inner membrane</location>
        <topology evidence="1">Multi-pass membrane protein</topology>
    </subcellularLocation>
</comment>
<comment type="similarity">
    <text evidence="1">Belongs to the glycosyltransferase 4 family. MraY subfamily.</text>
</comment>
<reference key="1">
    <citation type="journal article" date="2006" name="Proc. Natl. Acad. Sci. U.S.A.">
        <title>Genome reduction in Leptospira borgpetersenii reflects limited transmission potential.</title>
        <authorList>
            <person name="Bulach D.M."/>
            <person name="Zuerner R.L."/>
            <person name="Wilson P."/>
            <person name="Seemann T."/>
            <person name="McGrath A."/>
            <person name="Cullen P.A."/>
            <person name="Davis J."/>
            <person name="Johnson M."/>
            <person name="Kuczek E."/>
            <person name="Alt D.P."/>
            <person name="Peterson-Burch B."/>
            <person name="Coppel R.L."/>
            <person name="Rood J.I."/>
            <person name="Davies J.K."/>
            <person name="Adler B."/>
        </authorList>
    </citation>
    <scope>NUCLEOTIDE SEQUENCE [LARGE SCALE GENOMIC DNA]</scope>
    <source>
        <strain>L550</strain>
    </source>
</reference>
<dbReference type="EC" id="2.7.8.13" evidence="1"/>
<dbReference type="EMBL" id="CP000348">
    <property type="protein sequence ID" value="ABJ79961.1"/>
    <property type="molecule type" value="Genomic_DNA"/>
</dbReference>
<dbReference type="RefSeq" id="WP_011670912.1">
    <property type="nucleotide sequence ID" value="NC_008508.1"/>
</dbReference>
<dbReference type="SMR" id="Q04Y84"/>
<dbReference type="KEGG" id="lbl:LBL_2601"/>
<dbReference type="HOGENOM" id="CLU_023982_0_0_12"/>
<dbReference type="UniPathway" id="UPA00219"/>
<dbReference type="GO" id="GO:0005886">
    <property type="term" value="C:plasma membrane"/>
    <property type="evidence" value="ECO:0007669"/>
    <property type="project" value="UniProtKB-SubCell"/>
</dbReference>
<dbReference type="GO" id="GO:0046872">
    <property type="term" value="F:metal ion binding"/>
    <property type="evidence" value="ECO:0007669"/>
    <property type="project" value="UniProtKB-KW"/>
</dbReference>
<dbReference type="GO" id="GO:0008963">
    <property type="term" value="F:phospho-N-acetylmuramoyl-pentapeptide-transferase activity"/>
    <property type="evidence" value="ECO:0007669"/>
    <property type="project" value="UniProtKB-UniRule"/>
</dbReference>
<dbReference type="GO" id="GO:0051992">
    <property type="term" value="F:UDP-N-acetylmuramoyl-L-alanyl-D-glutamyl-meso-2,6-diaminopimelyl-D-alanyl-D-alanine:undecaprenyl-phosphate transferase activity"/>
    <property type="evidence" value="ECO:0007669"/>
    <property type="project" value="RHEA"/>
</dbReference>
<dbReference type="GO" id="GO:0051301">
    <property type="term" value="P:cell division"/>
    <property type="evidence" value="ECO:0007669"/>
    <property type="project" value="UniProtKB-KW"/>
</dbReference>
<dbReference type="GO" id="GO:0071555">
    <property type="term" value="P:cell wall organization"/>
    <property type="evidence" value="ECO:0007669"/>
    <property type="project" value="UniProtKB-KW"/>
</dbReference>
<dbReference type="GO" id="GO:0009252">
    <property type="term" value="P:peptidoglycan biosynthetic process"/>
    <property type="evidence" value="ECO:0007669"/>
    <property type="project" value="UniProtKB-UniRule"/>
</dbReference>
<dbReference type="GO" id="GO:0008360">
    <property type="term" value="P:regulation of cell shape"/>
    <property type="evidence" value="ECO:0007669"/>
    <property type="project" value="UniProtKB-KW"/>
</dbReference>
<dbReference type="CDD" id="cd06852">
    <property type="entry name" value="GT_MraY"/>
    <property type="match status" value="1"/>
</dbReference>
<dbReference type="HAMAP" id="MF_00038">
    <property type="entry name" value="MraY"/>
    <property type="match status" value="1"/>
</dbReference>
<dbReference type="InterPro" id="IPR000715">
    <property type="entry name" value="Glycosyl_transferase_4"/>
</dbReference>
<dbReference type="InterPro" id="IPR003524">
    <property type="entry name" value="PNAcMuramoyl-5peptid_Trfase"/>
</dbReference>
<dbReference type="InterPro" id="IPR018480">
    <property type="entry name" value="PNAcMuramoyl-5peptid_Trfase_CS"/>
</dbReference>
<dbReference type="NCBIfam" id="TIGR00445">
    <property type="entry name" value="mraY"/>
    <property type="match status" value="1"/>
</dbReference>
<dbReference type="PANTHER" id="PTHR22926">
    <property type="entry name" value="PHOSPHO-N-ACETYLMURAMOYL-PENTAPEPTIDE-TRANSFERASE"/>
    <property type="match status" value="1"/>
</dbReference>
<dbReference type="PANTHER" id="PTHR22926:SF5">
    <property type="entry name" value="PHOSPHO-N-ACETYLMURAMOYL-PENTAPEPTIDE-TRANSFERASE HOMOLOG"/>
    <property type="match status" value="1"/>
</dbReference>
<dbReference type="Pfam" id="PF00953">
    <property type="entry name" value="Glycos_transf_4"/>
    <property type="match status" value="1"/>
</dbReference>
<dbReference type="Pfam" id="PF10555">
    <property type="entry name" value="MraY_sig1"/>
    <property type="match status" value="1"/>
</dbReference>
<dbReference type="PROSITE" id="PS01347">
    <property type="entry name" value="MRAY_1"/>
    <property type="match status" value="1"/>
</dbReference>
<dbReference type="PROSITE" id="PS01348">
    <property type="entry name" value="MRAY_2"/>
    <property type="match status" value="1"/>
</dbReference>
<name>MRAY_LEPBL</name>